<keyword id="KW-0479">Metal-binding</keyword>
<keyword id="KW-1185">Reference proteome</keyword>
<keyword id="KW-0687">Ribonucleoprotein</keyword>
<keyword id="KW-0689">Ribosomal protein</keyword>
<keyword id="KW-0862">Zinc</keyword>
<keyword id="KW-0863">Zinc-finger</keyword>
<feature type="chain" id="PRO_0000139835" description="Large ribosomal subunit protein eL43">
    <location>
        <begin position="1"/>
        <end position="92"/>
    </location>
</feature>
<feature type="zinc finger region" description="C4-type">
    <location>
        <begin position="39"/>
        <end position="60"/>
    </location>
</feature>
<comment type="similarity">
    <text evidence="1">Belongs to the eukaryotic ribosomal protein eL43 family.</text>
</comment>
<name>RL43_CANGA</name>
<protein>
    <recommendedName>
        <fullName evidence="1">Large ribosomal subunit protein eL43</fullName>
    </recommendedName>
    <alternativeName>
        <fullName>60S ribosomal protein L43</fullName>
    </alternativeName>
</protein>
<accession>Q6FRG6</accession>
<dbReference type="EMBL" id="CR380954">
    <property type="protein sequence ID" value="CAG60111.1"/>
    <property type="molecule type" value="Genomic_DNA"/>
</dbReference>
<dbReference type="RefSeq" id="XP_447178.1">
    <property type="nucleotide sequence ID" value="XM_447178.1"/>
</dbReference>
<dbReference type="SMR" id="Q6FRG6"/>
<dbReference type="FunCoup" id="Q6FRG6">
    <property type="interactions" value="1145"/>
</dbReference>
<dbReference type="STRING" id="284593.Q6FRG6"/>
<dbReference type="EnsemblFungi" id="CAGL0H08734g-T">
    <property type="protein sequence ID" value="CAGL0H08734g-T-p1"/>
    <property type="gene ID" value="CAGL0H08734g"/>
</dbReference>
<dbReference type="KEGG" id="cgr:2888745"/>
<dbReference type="CGD" id="CAL0131684">
    <property type="gene designation" value="CAGL0H08734g"/>
</dbReference>
<dbReference type="VEuPathDB" id="FungiDB:B1J91_H08734g"/>
<dbReference type="VEuPathDB" id="FungiDB:CAGL0H08734g"/>
<dbReference type="eggNOG" id="KOG0402">
    <property type="taxonomic scope" value="Eukaryota"/>
</dbReference>
<dbReference type="HOGENOM" id="CLU_141199_1_0_1"/>
<dbReference type="InParanoid" id="Q6FRG6"/>
<dbReference type="OMA" id="GPRYGRK"/>
<dbReference type="Proteomes" id="UP000002428">
    <property type="component" value="Chromosome H"/>
</dbReference>
<dbReference type="GO" id="GO:0005576">
    <property type="term" value="C:extracellular region"/>
    <property type="evidence" value="ECO:0000314"/>
    <property type="project" value="CGD"/>
</dbReference>
<dbReference type="GO" id="GO:1990904">
    <property type="term" value="C:ribonucleoprotein complex"/>
    <property type="evidence" value="ECO:0007669"/>
    <property type="project" value="UniProtKB-KW"/>
</dbReference>
<dbReference type="GO" id="GO:0005840">
    <property type="term" value="C:ribosome"/>
    <property type="evidence" value="ECO:0007669"/>
    <property type="project" value="UniProtKB-KW"/>
</dbReference>
<dbReference type="GO" id="GO:0003735">
    <property type="term" value="F:structural constituent of ribosome"/>
    <property type="evidence" value="ECO:0007669"/>
    <property type="project" value="InterPro"/>
</dbReference>
<dbReference type="GO" id="GO:0008270">
    <property type="term" value="F:zinc ion binding"/>
    <property type="evidence" value="ECO:0007669"/>
    <property type="project" value="UniProtKB-KW"/>
</dbReference>
<dbReference type="GO" id="GO:0006412">
    <property type="term" value="P:translation"/>
    <property type="evidence" value="ECO:0007669"/>
    <property type="project" value="InterPro"/>
</dbReference>
<dbReference type="FunFam" id="2.20.25.30:FF:000002">
    <property type="entry name" value="60S ribosomal protein L37a"/>
    <property type="match status" value="1"/>
</dbReference>
<dbReference type="Gene3D" id="2.20.25.30">
    <property type="match status" value="1"/>
</dbReference>
<dbReference type="HAMAP" id="MF_00327">
    <property type="entry name" value="Ribosomal_eL43"/>
    <property type="match status" value="1"/>
</dbReference>
<dbReference type="InterPro" id="IPR011331">
    <property type="entry name" value="Ribosomal_eL37/eL43"/>
</dbReference>
<dbReference type="InterPro" id="IPR002674">
    <property type="entry name" value="Ribosomal_eL43"/>
</dbReference>
<dbReference type="InterPro" id="IPR050522">
    <property type="entry name" value="Ribosomal_protein_eL43"/>
</dbReference>
<dbReference type="InterPro" id="IPR011332">
    <property type="entry name" value="Ribosomal_zn-bd"/>
</dbReference>
<dbReference type="NCBIfam" id="TIGR00280">
    <property type="entry name" value="eL43_euk_arch"/>
    <property type="match status" value="1"/>
</dbReference>
<dbReference type="NCBIfam" id="NF003058">
    <property type="entry name" value="PRK03976.1"/>
    <property type="match status" value="1"/>
</dbReference>
<dbReference type="PANTHER" id="PTHR48129">
    <property type="entry name" value="60S RIBOSOMAL PROTEIN L37A"/>
    <property type="match status" value="1"/>
</dbReference>
<dbReference type="PANTHER" id="PTHR48129:SF1">
    <property type="entry name" value="LARGE RIBOSOMAL SUBUNIT PROTEIN EL43"/>
    <property type="match status" value="1"/>
</dbReference>
<dbReference type="Pfam" id="PF01780">
    <property type="entry name" value="Ribosomal_L37ae"/>
    <property type="match status" value="1"/>
</dbReference>
<dbReference type="SUPFAM" id="SSF57829">
    <property type="entry name" value="Zn-binding ribosomal proteins"/>
    <property type="match status" value="1"/>
</dbReference>
<organism>
    <name type="scientific">Candida glabrata (strain ATCC 2001 / BCRC 20586 / JCM 3761 / NBRC 0622 / NRRL Y-65 / CBS 138)</name>
    <name type="common">Yeast</name>
    <name type="synonym">Nakaseomyces glabratus</name>
    <dbReference type="NCBI Taxonomy" id="284593"/>
    <lineage>
        <taxon>Eukaryota</taxon>
        <taxon>Fungi</taxon>
        <taxon>Dikarya</taxon>
        <taxon>Ascomycota</taxon>
        <taxon>Saccharomycotina</taxon>
        <taxon>Saccharomycetes</taxon>
        <taxon>Saccharomycetales</taxon>
        <taxon>Saccharomycetaceae</taxon>
        <taxon>Nakaseomyces</taxon>
    </lineage>
</organism>
<sequence length="92" mass="10111">MAKRTKKVGITGKYGVRYGSSLRRQVKKLEVQQHARYDCSFCGKKTVRRGAAGIWSCHSCKKTVAGGAYTVSTAAAATVRSTIRRLRDMVEA</sequence>
<gene>
    <name type="primary">RPL43</name>
    <name type="ordered locus">CAGL0H08734g</name>
</gene>
<evidence type="ECO:0000305" key="1"/>
<reference key="1">
    <citation type="journal article" date="2004" name="Nature">
        <title>Genome evolution in yeasts.</title>
        <authorList>
            <person name="Dujon B."/>
            <person name="Sherman D."/>
            <person name="Fischer G."/>
            <person name="Durrens P."/>
            <person name="Casaregola S."/>
            <person name="Lafontaine I."/>
            <person name="de Montigny J."/>
            <person name="Marck C."/>
            <person name="Neuveglise C."/>
            <person name="Talla E."/>
            <person name="Goffard N."/>
            <person name="Frangeul L."/>
            <person name="Aigle M."/>
            <person name="Anthouard V."/>
            <person name="Babour A."/>
            <person name="Barbe V."/>
            <person name="Barnay S."/>
            <person name="Blanchin S."/>
            <person name="Beckerich J.-M."/>
            <person name="Beyne E."/>
            <person name="Bleykasten C."/>
            <person name="Boisrame A."/>
            <person name="Boyer J."/>
            <person name="Cattolico L."/>
            <person name="Confanioleri F."/>
            <person name="de Daruvar A."/>
            <person name="Despons L."/>
            <person name="Fabre E."/>
            <person name="Fairhead C."/>
            <person name="Ferry-Dumazet H."/>
            <person name="Groppi A."/>
            <person name="Hantraye F."/>
            <person name="Hennequin C."/>
            <person name="Jauniaux N."/>
            <person name="Joyet P."/>
            <person name="Kachouri R."/>
            <person name="Kerrest A."/>
            <person name="Koszul R."/>
            <person name="Lemaire M."/>
            <person name="Lesur I."/>
            <person name="Ma L."/>
            <person name="Muller H."/>
            <person name="Nicaud J.-M."/>
            <person name="Nikolski M."/>
            <person name="Oztas S."/>
            <person name="Ozier-Kalogeropoulos O."/>
            <person name="Pellenz S."/>
            <person name="Potier S."/>
            <person name="Richard G.-F."/>
            <person name="Straub M.-L."/>
            <person name="Suleau A."/>
            <person name="Swennen D."/>
            <person name="Tekaia F."/>
            <person name="Wesolowski-Louvel M."/>
            <person name="Westhof E."/>
            <person name="Wirth B."/>
            <person name="Zeniou-Meyer M."/>
            <person name="Zivanovic Y."/>
            <person name="Bolotin-Fukuhara M."/>
            <person name="Thierry A."/>
            <person name="Bouchier C."/>
            <person name="Caudron B."/>
            <person name="Scarpelli C."/>
            <person name="Gaillardin C."/>
            <person name="Weissenbach J."/>
            <person name="Wincker P."/>
            <person name="Souciet J.-L."/>
        </authorList>
    </citation>
    <scope>NUCLEOTIDE SEQUENCE [LARGE SCALE GENOMIC DNA]</scope>
    <source>
        <strain>ATCC 2001 / BCRC 20586 / JCM 3761 / NBRC 0622 / NRRL Y-65 / CBS 138</strain>
    </source>
</reference>
<proteinExistence type="inferred from homology"/>